<comment type="function">
    <text evidence="2">Cell wall formation.</text>
</comment>
<comment type="catalytic activity">
    <reaction evidence="2">
        <text>2 D-alanine + ATP = D-alanyl-D-alanine + ADP + phosphate + H(+)</text>
        <dbReference type="Rhea" id="RHEA:11224"/>
        <dbReference type="ChEBI" id="CHEBI:15378"/>
        <dbReference type="ChEBI" id="CHEBI:30616"/>
        <dbReference type="ChEBI" id="CHEBI:43474"/>
        <dbReference type="ChEBI" id="CHEBI:57416"/>
        <dbReference type="ChEBI" id="CHEBI:57822"/>
        <dbReference type="ChEBI" id="CHEBI:456216"/>
        <dbReference type="EC" id="6.3.2.4"/>
    </reaction>
</comment>
<comment type="cofactor">
    <cofactor evidence="1">
        <name>Mg(2+)</name>
        <dbReference type="ChEBI" id="CHEBI:18420"/>
    </cofactor>
    <cofactor evidence="1">
        <name>Mn(2+)</name>
        <dbReference type="ChEBI" id="CHEBI:29035"/>
    </cofactor>
    <text evidence="1">Binds 2 magnesium or manganese ions per subunit.</text>
</comment>
<comment type="pathway">
    <text evidence="2">Cell wall biogenesis; peptidoglycan biosynthesis.</text>
</comment>
<comment type="subcellular location">
    <subcellularLocation>
        <location evidence="2">Cytoplasm</location>
    </subcellularLocation>
</comment>
<comment type="similarity">
    <text evidence="2">Belongs to the D-alanine--D-alanine ligase family.</text>
</comment>
<comment type="sequence caution" evidence="3">
    <conflict type="erroneous initiation">
        <sequence resource="EMBL-CDS" id="AAA68950"/>
    </conflict>
</comment>
<proteinExistence type="inferred from homology"/>
<reference key="1">
    <citation type="journal article" date="1999" name="Nature">
        <title>Evidence for lateral gene transfer between Archaea and Bacteria from genome sequence of Thermotoga maritima.</title>
        <authorList>
            <person name="Nelson K.E."/>
            <person name="Clayton R.A."/>
            <person name="Gill S.R."/>
            <person name="Gwinn M.L."/>
            <person name="Dodson R.J."/>
            <person name="Haft D.H."/>
            <person name="Hickey E.K."/>
            <person name="Peterson J.D."/>
            <person name="Nelson W.C."/>
            <person name="Ketchum K.A."/>
            <person name="McDonald L.A."/>
            <person name="Utterback T.R."/>
            <person name="Malek J.A."/>
            <person name="Linher K.D."/>
            <person name="Garrett M.M."/>
            <person name="Stewart A.M."/>
            <person name="Cotton M.D."/>
            <person name="Pratt M.S."/>
            <person name="Phillips C.A."/>
            <person name="Richardson D.L."/>
            <person name="Heidelberg J.F."/>
            <person name="Sutton G.G."/>
            <person name="Fleischmann R.D."/>
            <person name="Eisen J.A."/>
            <person name="White O."/>
            <person name="Salzberg S.L."/>
            <person name="Smith H.O."/>
            <person name="Venter J.C."/>
            <person name="Fraser C.M."/>
        </authorList>
    </citation>
    <scope>NUCLEOTIDE SEQUENCE [LARGE SCALE GENOMIC DNA]</scope>
    <source>
        <strain>ATCC 43589 / DSM 3109 / JCM 10099 / NBRC 100826 / MSB8</strain>
    </source>
</reference>
<reference key="2">
    <citation type="journal article" date="1995" name="Biochim. Biophys. Acta">
        <title>Cloning and sequencing of the gene coding for topoisomerase I from the extremely thermophilic eubacterium, Thermotoga maritima.</title>
        <authorList>
            <person name="Bouthier de la Tour C."/>
            <person name="Kaltoum H."/>
            <person name="Portemer C."/>
            <person name="Confalonieri F."/>
            <person name="Huber R."/>
            <person name="Duguet M."/>
        </authorList>
    </citation>
    <scope>NUCLEOTIDE SEQUENCE [GENOMIC DNA] OF 1-118</scope>
    <source>
        <strain>ATCC 43589 / DSM 3109 / JCM 10099 / NBRC 100826 / MSB8</strain>
    </source>
</reference>
<keyword id="KW-0067">ATP-binding</keyword>
<keyword id="KW-0133">Cell shape</keyword>
<keyword id="KW-0961">Cell wall biogenesis/degradation</keyword>
<keyword id="KW-0963">Cytoplasm</keyword>
<keyword id="KW-0436">Ligase</keyword>
<keyword id="KW-0460">Magnesium</keyword>
<keyword id="KW-0464">Manganese</keyword>
<keyword id="KW-0479">Metal-binding</keyword>
<keyword id="KW-0547">Nucleotide-binding</keyword>
<keyword id="KW-0573">Peptidoglycan synthesis</keyword>
<keyword id="KW-1185">Reference proteome</keyword>
<sequence length="303" mass="34250">MRVALLMGGVSREREISLRSGERVKKALEKLGYEHTVFDVREDFLKKVDQLKSFDVVFNVLHGTFGEDGTLQAILDFLGIRYTGSDAFSSMICFDKLVTYRFLKGTVEIPDFVEIKEFMKTSPLGYPCVVKPRREGSSIGVFVCESDEEFQHALKEDLPRYGSVIVQKYIPGREMTVSILETEKGFEILPVLELRPKRRFYDYVAKYTKGETEFILPAPLNPSEERLVKEMALKAFVEAGCRGFGRVDGIFSDGRFYFLEINTVPGLTETSDLPASAKAGGIEFEELVEIILKSAFLKEGVRV</sequence>
<dbReference type="EC" id="6.3.2.4" evidence="2"/>
<dbReference type="EMBL" id="AE000512">
    <property type="protein sequence ID" value="AAD35347.1"/>
    <property type="molecule type" value="Genomic_DNA"/>
</dbReference>
<dbReference type="EMBL" id="U27841">
    <property type="protein sequence ID" value="AAA68950.1"/>
    <property type="status" value="ALT_INIT"/>
    <property type="molecule type" value="Genomic_DNA"/>
</dbReference>
<dbReference type="PIR" id="B72400">
    <property type="entry name" value="B72400"/>
</dbReference>
<dbReference type="RefSeq" id="NP_228072.1">
    <property type="nucleotide sequence ID" value="NC_000853.1"/>
</dbReference>
<dbReference type="RefSeq" id="WP_010865083.1">
    <property type="nucleotide sequence ID" value="NZ_CP011107.1"/>
</dbReference>
<dbReference type="SMR" id="P46805"/>
<dbReference type="FunCoup" id="P46805">
    <property type="interactions" value="247"/>
</dbReference>
<dbReference type="STRING" id="243274.TM_0259"/>
<dbReference type="PaxDb" id="243274-THEMA_03430"/>
<dbReference type="EnsemblBacteria" id="AAD35347">
    <property type="protein sequence ID" value="AAD35347"/>
    <property type="gene ID" value="TM_0259"/>
</dbReference>
<dbReference type="KEGG" id="tma:TM0259"/>
<dbReference type="KEGG" id="tmi:THEMA_03430"/>
<dbReference type="KEGG" id="tmm:Tmari_0257"/>
<dbReference type="KEGG" id="tmw:THMA_0266"/>
<dbReference type="eggNOG" id="COG1181">
    <property type="taxonomic scope" value="Bacteria"/>
</dbReference>
<dbReference type="InParanoid" id="P46805"/>
<dbReference type="OrthoDB" id="9813261at2"/>
<dbReference type="BRENDA" id="6.3.2.4">
    <property type="organism ID" value="6331"/>
</dbReference>
<dbReference type="UniPathway" id="UPA00219"/>
<dbReference type="Proteomes" id="UP000008183">
    <property type="component" value="Chromosome"/>
</dbReference>
<dbReference type="GO" id="GO:0005737">
    <property type="term" value="C:cytoplasm"/>
    <property type="evidence" value="ECO:0007669"/>
    <property type="project" value="UniProtKB-SubCell"/>
</dbReference>
<dbReference type="GO" id="GO:0005524">
    <property type="term" value="F:ATP binding"/>
    <property type="evidence" value="ECO:0007669"/>
    <property type="project" value="UniProtKB-KW"/>
</dbReference>
<dbReference type="GO" id="GO:0008716">
    <property type="term" value="F:D-alanine-D-alanine ligase activity"/>
    <property type="evidence" value="ECO:0000318"/>
    <property type="project" value="GO_Central"/>
</dbReference>
<dbReference type="GO" id="GO:0046872">
    <property type="term" value="F:metal ion binding"/>
    <property type="evidence" value="ECO:0007669"/>
    <property type="project" value="UniProtKB-KW"/>
</dbReference>
<dbReference type="GO" id="GO:0071555">
    <property type="term" value="P:cell wall organization"/>
    <property type="evidence" value="ECO:0007669"/>
    <property type="project" value="UniProtKB-KW"/>
</dbReference>
<dbReference type="GO" id="GO:0009252">
    <property type="term" value="P:peptidoglycan biosynthetic process"/>
    <property type="evidence" value="ECO:0007669"/>
    <property type="project" value="UniProtKB-UniRule"/>
</dbReference>
<dbReference type="GO" id="GO:0008360">
    <property type="term" value="P:regulation of cell shape"/>
    <property type="evidence" value="ECO:0007669"/>
    <property type="project" value="UniProtKB-KW"/>
</dbReference>
<dbReference type="FunFam" id="3.30.1490.20:FF:000057">
    <property type="entry name" value="D-alanine--D-alanine ligase"/>
    <property type="match status" value="1"/>
</dbReference>
<dbReference type="FunFam" id="3.30.470.20:FF:000008">
    <property type="entry name" value="D-alanine--D-alanine ligase"/>
    <property type="match status" value="1"/>
</dbReference>
<dbReference type="Gene3D" id="3.40.50.20">
    <property type="match status" value="1"/>
</dbReference>
<dbReference type="Gene3D" id="3.30.1490.20">
    <property type="entry name" value="ATP-grasp fold, A domain"/>
    <property type="match status" value="1"/>
</dbReference>
<dbReference type="Gene3D" id="3.30.470.20">
    <property type="entry name" value="ATP-grasp fold, B domain"/>
    <property type="match status" value="1"/>
</dbReference>
<dbReference type="HAMAP" id="MF_00047">
    <property type="entry name" value="Dala_Dala_lig"/>
    <property type="match status" value="1"/>
</dbReference>
<dbReference type="InterPro" id="IPR011761">
    <property type="entry name" value="ATP-grasp"/>
</dbReference>
<dbReference type="InterPro" id="IPR013815">
    <property type="entry name" value="ATP_grasp_subdomain_1"/>
</dbReference>
<dbReference type="InterPro" id="IPR000291">
    <property type="entry name" value="D-Ala_lig_Van_CS"/>
</dbReference>
<dbReference type="InterPro" id="IPR005905">
    <property type="entry name" value="D_ala_D_ala"/>
</dbReference>
<dbReference type="InterPro" id="IPR011095">
    <property type="entry name" value="Dala_Dala_lig_C"/>
</dbReference>
<dbReference type="InterPro" id="IPR011127">
    <property type="entry name" value="Dala_Dala_lig_N"/>
</dbReference>
<dbReference type="InterPro" id="IPR016185">
    <property type="entry name" value="PreATP-grasp_dom_sf"/>
</dbReference>
<dbReference type="NCBIfam" id="TIGR01205">
    <property type="entry name" value="D_ala_D_alaTIGR"/>
    <property type="match status" value="1"/>
</dbReference>
<dbReference type="NCBIfam" id="NF002378">
    <property type="entry name" value="PRK01372.1"/>
    <property type="match status" value="1"/>
</dbReference>
<dbReference type="NCBIfam" id="NF011169">
    <property type="entry name" value="PRK14571.1"/>
    <property type="match status" value="1"/>
</dbReference>
<dbReference type="PANTHER" id="PTHR23132">
    <property type="entry name" value="D-ALANINE--D-ALANINE LIGASE"/>
    <property type="match status" value="1"/>
</dbReference>
<dbReference type="PANTHER" id="PTHR23132:SF23">
    <property type="entry name" value="D-ALANINE--D-ALANINE LIGASE B"/>
    <property type="match status" value="1"/>
</dbReference>
<dbReference type="Pfam" id="PF07478">
    <property type="entry name" value="Dala_Dala_lig_C"/>
    <property type="match status" value="1"/>
</dbReference>
<dbReference type="Pfam" id="PF01820">
    <property type="entry name" value="Dala_Dala_lig_N"/>
    <property type="match status" value="1"/>
</dbReference>
<dbReference type="PIRSF" id="PIRSF039102">
    <property type="entry name" value="Ddl/VanB"/>
    <property type="match status" value="1"/>
</dbReference>
<dbReference type="SUPFAM" id="SSF56059">
    <property type="entry name" value="Glutathione synthetase ATP-binding domain-like"/>
    <property type="match status" value="1"/>
</dbReference>
<dbReference type="SUPFAM" id="SSF52440">
    <property type="entry name" value="PreATP-grasp domain"/>
    <property type="match status" value="1"/>
</dbReference>
<dbReference type="PROSITE" id="PS50975">
    <property type="entry name" value="ATP_GRASP"/>
    <property type="match status" value="1"/>
</dbReference>
<dbReference type="PROSITE" id="PS00843">
    <property type="entry name" value="DALA_DALA_LIGASE_1"/>
    <property type="match status" value="1"/>
</dbReference>
<dbReference type="PROSITE" id="PS00844">
    <property type="entry name" value="DALA_DALA_LIGASE_2"/>
    <property type="match status" value="1"/>
</dbReference>
<name>DDL_THEMA</name>
<feature type="chain" id="PRO_0000177896" description="D-alanine--D-alanine ligase">
    <location>
        <begin position="1"/>
        <end position="303"/>
    </location>
</feature>
<feature type="domain" description="ATP-grasp" evidence="2">
    <location>
        <begin position="99"/>
        <end position="293"/>
    </location>
</feature>
<feature type="binding site" evidence="2">
    <location>
        <begin position="125"/>
        <end position="176"/>
    </location>
    <ligand>
        <name>ATP</name>
        <dbReference type="ChEBI" id="CHEBI:30616"/>
    </ligand>
</feature>
<feature type="binding site" evidence="2">
    <location>
        <position position="248"/>
    </location>
    <ligand>
        <name>Mg(2+)</name>
        <dbReference type="ChEBI" id="CHEBI:18420"/>
        <label>1</label>
    </ligand>
</feature>
<feature type="binding site" evidence="2">
    <location>
        <position position="260"/>
    </location>
    <ligand>
        <name>Mg(2+)</name>
        <dbReference type="ChEBI" id="CHEBI:18420"/>
        <label>1</label>
    </ligand>
</feature>
<feature type="binding site" evidence="2">
    <location>
        <position position="260"/>
    </location>
    <ligand>
        <name>Mg(2+)</name>
        <dbReference type="ChEBI" id="CHEBI:18420"/>
        <label>2</label>
    </ligand>
</feature>
<feature type="binding site" evidence="2">
    <location>
        <position position="262"/>
    </location>
    <ligand>
        <name>Mg(2+)</name>
        <dbReference type="ChEBI" id="CHEBI:18420"/>
        <label>2</label>
    </ligand>
</feature>
<accession>P46805</accession>
<evidence type="ECO:0000250" key="1"/>
<evidence type="ECO:0000255" key="2">
    <source>
        <dbReference type="HAMAP-Rule" id="MF_00047"/>
    </source>
</evidence>
<evidence type="ECO:0000305" key="3"/>
<gene>
    <name evidence="2" type="primary">ddl</name>
    <name type="ordered locus">TM_0259</name>
</gene>
<organism>
    <name type="scientific">Thermotoga maritima (strain ATCC 43589 / DSM 3109 / JCM 10099 / NBRC 100826 / MSB8)</name>
    <dbReference type="NCBI Taxonomy" id="243274"/>
    <lineage>
        <taxon>Bacteria</taxon>
        <taxon>Thermotogati</taxon>
        <taxon>Thermotogota</taxon>
        <taxon>Thermotogae</taxon>
        <taxon>Thermotogales</taxon>
        <taxon>Thermotogaceae</taxon>
        <taxon>Thermotoga</taxon>
    </lineage>
</organism>
<protein>
    <recommendedName>
        <fullName evidence="2">D-alanine--D-alanine ligase</fullName>
        <ecNumber evidence="2">6.3.2.4</ecNumber>
    </recommendedName>
    <alternativeName>
        <fullName evidence="2">D-Ala-D-Ala ligase</fullName>
    </alternativeName>
    <alternativeName>
        <fullName evidence="2">D-alanylalanine synthetase</fullName>
    </alternativeName>
</protein>